<reference key="1">
    <citation type="journal article" date="2000" name="Nature">
        <title>Complete genome sequence of Pseudomonas aeruginosa PAO1, an opportunistic pathogen.</title>
        <authorList>
            <person name="Stover C.K."/>
            <person name="Pham X.-Q.T."/>
            <person name="Erwin A.L."/>
            <person name="Mizoguchi S.D."/>
            <person name="Warrener P."/>
            <person name="Hickey M.J."/>
            <person name="Brinkman F.S.L."/>
            <person name="Hufnagle W.O."/>
            <person name="Kowalik D.J."/>
            <person name="Lagrou M."/>
            <person name="Garber R.L."/>
            <person name="Goltry L."/>
            <person name="Tolentino E."/>
            <person name="Westbrock-Wadman S."/>
            <person name="Yuan Y."/>
            <person name="Brody L.L."/>
            <person name="Coulter S.N."/>
            <person name="Folger K.R."/>
            <person name="Kas A."/>
            <person name="Larbig K."/>
            <person name="Lim R.M."/>
            <person name="Smith K.A."/>
            <person name="Spencer D.H."/>
            <person name="Wong G.K.-S."/>
            <person name="Wu Z."/>
            <person name="Paulsen I.T."/>
            <person name="Reizer J."/>
            <person name="Saier M.H. Jr."/>
            <person name="Hancock R.E.W."/>
            <person name="Lory S."/>
            <person name="Olson M.V."/>
        </authorList>
    </citation>
    <scope>NUCLEOTIDE SEQUENCE [LARGE SCALE GENOMIC DNA]</scope>
    <source>
        <strain>ATCC 15692 / DSM 22644 / CIP 104116 / JCM 14847 / LMG 12228 / 1C / PRS 101 / PAO1</strain>
    </source>
</reference>
<gene>
    <name evidence="1" type="primary">cmk</name>
    <name type="ordered locus">PA3163</name>
</gene>
<sequence>MNGAVPMLAIDGPSGAGKGTVAGLLARRLGWNLLDSGALYRLLAFAAVNHGVDLTNEEALKVLAAHLDVQFVAADGSHGQRIILEGEEVTDVIRTEQVGAGASQVAALPAVRDALLQRQRAFREAPGLVADGRDMGTVVFPDAPLKIFLTASAEERARRRYLQLKAKGADVDQSALLEEIRERDERDSQRAVAPLKPADDAILLDSTEMSIEAVVETIIRHCERQGWDV</sequence>
<proteinExistence type="inferred from homology"/>
<organism>
    <name type="scientific">Pseudomonas aeruginosa (strain ATCC 15692 / DSM 22644 / CIP 104116 / JCM 14847 / LMG 12228 / 1C / PRS 101 / PAO1)</name>
    <dbReference type="NCBI Taxonomy" id="208964"/>
    <lineage>
        <taxon>Bacteria</taxon>
        <taxon>Pseudomonadati</taxon>
        <taxon>Pseudomonadota</taxon>
        <taxon>Gammaproteobacteria</taxon>
        <taxon>Pseudomonadales</taxon>
        <taxon>Pseudomonadaceae</taxon>
        <taxon>Pseudomonas</taxon>
    </lineage>
</organism>
<comment type="catalytic activity">
    <reaction evidence="1">
        <text>CMP + ATP = CDP + ADP</text>
        <dbReference type="Rhea" id="RHEA:11600"/>
        <dbReference type="ChEBI" id="CHEBI:30616"/>
        <dbReference type="ChEBI" id="CHEBI:58069"/>
        <dbReference type="ChEBI" id="CHEBI:60377"/>
        <dbReference type="ChEBI" id="CHEBI:456216"/>
        <dbReference type="EC" id="2.7.4.25"/>
    </reaction>
</comment>
<comment type="catalytic activity">
    <reaction evidence="1">
        <text>dCMP + ATP = dCDP + ADP</text>
        <dbReference type="Rhea" id="RHEA:25094"/>
        <dbReference type="ChEBI" id="CHEBI:30616"/>
        <dbReference type="ChEBI" id="CHEBI:57566"/>
        <dbReference type="ChEBI" id="CHEBI:58593"/>
        <dbReference type="ChEBI" id="CHEBI:456216"/>
        <dbReference type="EC" id="2.7.4.25"/>
    </reaction>
</comment>
<comment type="subcellular location">
    <subcellularLocation>
        <location evidence="1">Cytoplasm</location>
    </subcellularLocation>
</comment>
<comment type="similarity">
    <text evidence="1">Belongs to the cytidylate kinase family. Type 1 subfamily.</text>
</comment>
<protein>
    <recommendedName>
        <fullName evidence="1">Cytidylate kinase</fullName>
        <shortName evidence="1">CK</shortName>
        <ecNumber evidence="1">2.7.4.25</ecNumber>
    </recommendedName>
    <alternativeName>
        <fullName evidence="1">Cytidine monophosphate kinase</fullName>
        <shortName evidence="1">CMP kinase</shortName>
    </alternativeName>
</protein>
<evidence type="ECO:0000255" key="1">
    <source>
        <dbReference type="HAMAP-Rule" id="MF_00238"/>
    </source>
</evidence>
<feature type="chain" id="PRO_0000131956" description="Cytidylate kinase">
    <location>
        <begin position="1"/>
        <end position="229"/>
    </location>
</feature>
<feature type="binding site" evidence="1">
    <location>
        <begin position="12"/>
        <end position="20"/>
    </location>
    <ligand>
        <name>ATP</name>
        <dbReference type="ChEBI" id="CHEBI:30616"/>
    </ligand>
</feature>
<name>KCY_PSEAE</name>
<accession>Q9HZ70</accession>
<dbReference type="EC" id="2.7.4.25" evidence="1"/>
<dbReference type="EMBL" id="AE004091">
    <property type="protein sequence ID" value="AAG06551.1"/>
    <property type="molecule type" value="Genomic_DNA"/>
</dbReference>
<dbReference type="PIR" id="D83250">
    <property type="entry name" value="D83250"/>
</dbReference>
<dbReference type="RefSeq" id="NP_251853.1">
    <property type="nucleotide sequence ID" value="NC_002516.2"/>
</dbReference>
<dbReference type="RefSeq" id="WP_003106707.1">
    <property type="nucleotide sequence ID" value="NZ_QZGE01000023.1"/>
</dbReference>
<dbReference type="SMR" id="Q9HZ70"/>
<dbReference type="FunCoup" id="Q9HZ70">
    <property type="interactions" value="433"/>
</dbReference>
<dbReference type="STRING" id="208964.PA3163"/>
<dbReference type="PaxDb" id="208964-PA3163"/>
<dbReference type="GeneID" id="878958"/>
<dbReference type="KEGG" id="pae:PA3163"/>
<dbReference type="PATRIC" id="fig|208964.12.peg.3306"/>
<dbReference type="PseudoCAP" id="PA3163"/>
<dbReference type="HOGENOM" id="CLU_079959_0_2_6"/>
<dbReference type="InParanoid" id="Q9HZ70"/>
<dbReference type="OrthoDB" id="9807434at2"/>
<dbReference type="PhylomeDB" id="Q9HZ70"/>
<dbReference type="BioCyc" id="PAER208964:G1FZ6-3223-MONOMER"/>
<dbReference type="Proteomes" id="UP000002438">
    <property type="component" value="Chromosome"/>
</dbReference>
<dbReference type="GO" id="GO:0005829">
    <property type="term" value="C:cytosol"/>
    <property type="evidence" value="ECO:0000318"/>
    <property type="project" value="GO_Central"/>
</dbReference>
<dbReference type="GO" id="GO:0004127">
    <property type="term" value="F:(d)CMP kinase activity"/>
    <property type="evidence" value="ECO:0000318"/>
    <property type="project" value="GO_Central"/>
</dbReference>
<dbReference type="GO" id="GO:0005524">
    <property type="term" value="F:ATP binding"/>
    <property type="evidence" value="ECO:0007669"/>
    <property type="project" value="UniProtKB-UniRule"/>
</dbReference>
<dbReference type="GO" id="GO:0036430">
    <property type="term" value="F:CMP kinase activity"/>
    <property type="evidence" value="ECO:0007669"/>
    <property type="project" value="RHEA"/>
</dbReference>
<dbReference type="GO" id="GO:0036431">
    <property type="term" value="F:dCMP kinase activity"/>
    <property type="evidence" value="ECO:0007669"/>
    <property type="project" value="RHEA"/>
</dbReference>
<dbReference type="GO" id="GO:0015949">
    <property type="term" value="P:nucleobase-containing small molecule interconversion"/>
    <property type="evidence" value="ECO:0000318"/>
    <property type="project" value="GO_Central"/>
</dbReference>
<dbReference type="GO" id="GO:0006220">
    <property type="term" value="P:pyrimidine nucleotide metabolic process"/>
    <property type="evidence" value="ECO:0007669"/>
    <property type="project" value="UniProtKB-UniRule"/>
</dbReference>
<dbReference type="CDD" id="cd02020">
    <property type="entry name" value="CMPK"/>
    <property type="match status" value="1"/>
</dbReference>
<dbReference type="FunFam" id="3.40.50.300:FF:000262">
    <property type="entry name" value="Cytidylate kinase"/>
    <property type="match status" value="1"/>
</dbReference>
<dbReference type="Gene3D" id="3.40.50.300">
    <property type="entry name" value="P-loop containing nucleotide triphosphate hydrolases"/>
    <property type="match status" value="1"/>
</dbReference>
<dbReference type="HAMAP" id="MF_00238">
    <property type="entry name" value="Cytidyl_kinase_type1"/>
    <property type="match status" value="1"/>
</dbReference>
<dbReference type="InterPro" id="IPR003136">
    <property type="entry name" value="Cytidylate_kin"/>
</dbReference>
<dbReference type="InterPro" id="IPR011994">
    <property type="entry name" value="Cytidylate_kinase_dom"/>
</dbReference>
<dbReference type="InterPro" id="IPR027417">
    <property type="entry name" value="P-loop_NTPase"/>
</dbReference>
<dbReference type="NCBIfam" id="TIGR00017">
    <property type="entry name" value="cmk"/>
    <property type="match status" value="1"/>
</dbReference>
<dbReference type="PANTHER" id="PTHR21299:SF2">
    <property type="entry name" value="CYTIDYLATE KINASE"/>
    <property type="match status" value="1"/>
</dbReference>
<dbReference type="PANTHER" id="PTHR21299">
    <property type="entry name" value="CYTIDYLATE KINASE/PANTOATE-BETA-ALANINE LIGASE"/>
    <property type="match status" value="1"/>
</dbReference>
<dbReference type="Pfam" id="PF02224">
    <property type="entry name" value="Cytidylate_kin"/>
    <property type="match status" value="1"/>
</dbReference>
<dbReference type="SUPFAM" id="SSF52540">
    <property type="entry name" value="P-loop containing nucleoside triphosphate hydrolases"/>
    <property type="match status" value="1"/>
</dbReference>
<keyword id="KW-0067">ATP-binding</keyword>
<keyword id="KW-0963">Cytoplasm</keyword>
<keyword id="KW-0418">Kinase</keyword>
<keyword id="KW-0547">Nucleotide-binding</keyword>
<keyword id="KW-1185">Reference proteome</keyword>
<keyword id="KW-0808">Transferase</keyword>